<reference evidence="3" key="1">
    <citation type="journal article" date="2014" name="Front. Microbiol.">
        <title>JcTI-I: a novel trypsin inhibitor from Jatropha curcas seed cake with potential for bacterial infection treatment.</title>
        <authorList>
            <person name="Costa H.P."/>
            <person name="Oliveira J.T."/>
            <person name="Sousa D.O."/>
            <person name="Morais J.K."/>
            <person name="Moreno F.B."/>
            <person name="Monteiro-Moreira A.C."/>
            <person name="Viegas R.A."/>
            <person name="Vasconcelos I.M."/>
        </authorList>
    </citation>
    <scope>PROTEIN SEQUENCE</scope>
    <scope>FUNCTION</scope>
    <scope>BIOPHYSICOCHEMICAL PROPERTIES</scope>
    <scope>SUBUNIT</scope>
    <scope>DISULFIDE BONDS</scope>
    <scope>GLYCOSYLATION</scope>
    <scope>MASS SPECTROMETRY</scope>
    <source>
        <tissue evidence="1">Seed</tissue>
    </source>
</reference>
<keyword id="KW-0044">Antibiotic</keyword>
<keyword id="KW-0929">Antimicrobial</keyword>
<keyword id="KW-0903">Direct protein sequencing</keyword>
<keyword id="KW-1015">Disulfide bond</keyword>
<keyword id="KW-0325">Glycoprotein</keyword>
<keyword id="KW-0646">Protease inhibitor</keyword>
<keyword id="KW-0722">Serine protease inhibitor</keyword>
<accession>C0HJF7</accession>
<name>ITR1_JATCU</name>
<dbReference type="GO" id="GO:0004867">
    <property type="term" value="F:serine-type endopeptidase inhibitor activity"/>
    <property type="evidence" value="ECO:0000314"/>
    <property type="project" value="UniProtKB"/>
</dbReference>
<dbReference type="GO" id="GO:0050829">
    <property type="term" value="P:defense response to Gram-negative bacterium"/>
    <property type="evidence" value="ECO:0000314"/>
    <property type="project" value="UniProtKB"/>
</dbReference>
<dbReference type="GO" id="GO:0050830">
    <property type="term" value="P:defense response to Gram-positive bacterium"/>
    <property type="evidence" value="ECO:0000314"/>
    <property type="project" value="UniProtKB"/>
</dbReference>
<dbReference type="GO" id="GO:0010951">
    <property type="term" value="P:negative regulation of endopeptidase activity"/>
    <property type="evidence" value="ECO:0000314"/>
    <property type="project" value="UniProtKB"/>
</dbReference>
<feature type="chain" id="PRO_0000430166" description="Trypsin inhibitor 1">
    <location>
        <begin position="1"/>
        <end position="27" status="greater than"/>
    </location>
</feature>
<feature type="non-terminal residue" evidence="2">
    <location>
        <position position="27"/>
    </location>
</feature>
<comment type="function">
    <text evidence="1">Inhibits trypsin (IC(50)=1.25 uM) but not chymotrypsin or papain. Has antibacterial activity against S.enterica ATCC 10708 (MIC=5 ug/ml) and S.aureus ATCC 25923 (MIC=5 ug/ml) but not against B.subtilis ATCC 6633 or P.aeruginosa ATCC 25619. Has no hemolytic activity against human erythrocytes. Is not toxic to mice.</text>
</comment>
<comment type="biophysicochemical properties">
    <phDependence>
        <text evidence="1">Trypsin inhibitory activity is stable after incubation at pH 2 to pH 10 at 60 degrees Celsius for 1 hour.</text>
    </phDependence>
    <temperatureDependence>
        <text evidence="1">Trypsin inhibitory activity is stable after incubation at 90 degrees Celsius for up to 2 hours.</text>
    </temperatureDependence>
</comment>
<comment type="subunit">
    <text evidence="1 3">Homodimer.</text>
</comment>
<comment type="PTM">
    <text evidence="1">Contains disulfide bonds.</text>
</comment>
<comment type="PTM">
    <text evidence="1">Glycosylated.</text>
</comment>
<comment type="mass spectrometry"/>
<comment type="miscellaneous">
    <text evidence="2">The monomer may consist of two smaller chains which are linked by at least one disulfide bond.</text>
</comment>
<comment type="miscellaneous">
    <text evidence="1">On the 2D-gel the determined pI of this protein is: 6.6.</text>
</comment>
<sequence>VRDICKKEAERQDLSSCENYITQRRGY</sequence>
<evidence type="ECO:0000269" key="1">
    <source>
    </source>
</evidence>
<evidence type="ECO:0000303" key="2">
    <source>
    </source>
</evidence>
<evidence type="ECO:0000305" key="3"/>
<protein>
    <recommendedName>
        <fullName evidence="2">Trypsin inhibitor 1</fullName>
        <shortName evidence="2">JcTI-I</shortName>
    </recommendedName>
</protein>
<organism>
    <name type="scientific">Jatropha curcas</name>
    <name type="common">Barbados nut</name>
    <dbReference type="NCBI Taxonomy" id="180498"/>
    <lineage>
        <taxon>Eukaryota</taxon>
        <taxon>Viridiplantae</taxon>
        <taxon>Streptophyta</taxon>
        <taxon>Embryophyta</taxon>
        <taxon>Tracheophyta</taxon>
        <taxon>Spermatophyta</taxon>
        <taxon>Magnoliopsida</taxon>
        <taxon>eudicotyledons</taxon>
        <taxon>Gunneridae</taxon>
        <taxon>Pentapetalae</taxon>
        <taxon>rosids</taxon>
        <taxon>fabids</taxon>
        <taxon>Malpighiales</taxon>
        <taxon>Euphorbiaceae</taxon>
        <taxon>Crotonoideae</taxon>
        <taxon>Jatropheae</taxon>
        <taxon>Jatropha</taxon>
    </lineage>
</organism>
<proteinExistence type="evidence at protein level"/>